<reference key="1">
    <citation type="submission" date="2007-10" db="EMBL/GenBank/DDBJ databases">
        <title>Complete sequence of Shewanella pealeana ATCC 700345.</title>
        <authorList>
            <consortium name="US DOE Joint Genome Institute"/>
            <person name="Copeland A."/>
            <person name="Lucas S."/>
            <person name="Lapidus A."/>
            <person name="Barry K."/>
            <person name="Glavina del Rio T."/>
            <person name="Dalin E."/>
            <person name="Tice H."/>
            <person name="Pitluck S."/>
            <person name="Chertkov O."/>
            <person name="Brettin T."/>
            <person name="Bruce D."/>
            <person name="Detter J.C."/>
            <person name="Han C."/>
            <person name="Schmutz J."/>
            <person name="Larimer F."/>
            <person name="Land M."/>
            <person name="Hauser L."/>
            <person name="Kyrpides N."/>
            <person name="Kim E."/>
            <person name="Zhao J.-S.Z."/>
            <person name="Manno D."/>
            <person name="Hawari J."/>
            <person name="Richardson P."/>
        </authorList>
    </citation>
    <scope>NUCLEOTIDE SEQUENCE [LARGE SCALE GENOMIC DNA]</scope>
    <source>
        <strain>ATCC 700345 / ANG-SQ1</strain>
    </source>
</reference>
<name>SYL_SHEPA</name>
<gene>
    <name evidence="1" type="primary">leuS</name>
    <name type="ordered locus">Spea_3143</name>
</gene>
<dbReference type="EC" id="6.1.1.4" evidence="1"/>
<dbReference type="EMBL" id="CP000851">
    <property type="protein sequence ID" value="ABV88459.1"/>
    <property type="status" value="ALT_INIT"/>
    <property type="molecule type" value="Genomic_DNA"/>
</dbReference>
<dbReference type="RefSeq" id="WP_041411594.1">
    <property type="nucleotide sequence ID" value="NC_009901.1"/>
</dbReference>
<dbReference type="SMR" id="A8H7C2"/>
<dbReference type="STRING" id="398579.Spea_3143"/>
<dbReference type="KEGG" id="spl:Spea_3143"/>
<dbReference type="eggNOG" id="COG0495">
    <property type="taxonomic scope" value="Bacteria"/>
</dbReference>
<dbReference type="HOGENOM" id="CLU_004427_0_0_6"/>
<dbReference type="OrthoDB" id="9810365at2"/>
<dbReference type="Proteomes" id="UP000002608">
    <property type="component" value="Chromosome"/>
</dbReference>
<dbReference type="GO" id="GO:0005829">
    <property type="term" value="C:cytosol"/>
    <property type="evidence" value="ECO:0007669"/>
    <property type="project" value="TreeGrafter"/>
</dbReference>
<dbReference type="GO" id="GO:0002161">
    <property type="term" value="F:aminoacyl-tRNA deacylase activity"/>
    <property type="evidence" value="ECO:0007669"/>
    <property type="project" value="InterPro"/>
</dbReference>
<dbReference type="GO" id="GO:0005524">
    <property type="term" value="F:ATP binding"/>
    <property type="evidence" value="ECO:0007669"/>
    <property type="project" value="UniProtKB-UniRule"/>
</dbReference>
<dbReference type="GO" id="GO:0004823">
    <property type="term" value="F:leucine-tRNA ligase activity"/>
    <property type="evidence" value="ECO:0007669"/>
    <property type="project" value="UniProtKB-UniRule"/>
</dbReference>
<dbReference type="GO" id="GO:0006429">
    <property type="term" value="P:leucyl-tRNA aminoacylation"/>
    <property type="evidence" value="ECO:0007669"/>
    <property type="project" value="UniProtKB-UniRule"/>
</dbReference>
<dbReference type="CDD" id="cd07958">
    <property type="entry name" value="Anticodon_Ia_Leu_BEm"/>
    <property type="match status" value="1"/>
</dbReference>
<dbReference type="CDD" id="cd00812">
    <property type="entry name" value="LeuRS_core"/>
    <property type="match status" value="1"/>
</dbReference>
<dbReference type="FunFam" id="1.10.730.10:FF:000002">
    <property type="entry name" value="Leucine--tRNA ligase"/>
    <property type="match status" value="1"/>
</dbReference>
<dbReference type="FunFam" id="1.10.730.10:FF:000003">
    <property type="entry name" value="Leucine--tRNA ligase"/>
    <property type="match status" value="1"/>
</dbReference>
<dbReference type="FunFam" id="2.20.28.290:FF:000001">
    <property type="entry name" value="Leucine--tRNA ligase"/>
    <property type="match status" value="1"/>
</dbReference>
<dbReference type="FunFam" id="3.10.20.590:FF:000001">
    <property type="entry name" value="Leucine--tRNA ligase"/>
    <property type="match status" value="1"/>
</dbReference>
<dbReference type="FunFam" id="3.40.50.620:FF:000003">
    <property type="entry name" value="Leucine--tRNA ligase"/>
    <property type="match status" value="1"/>
</dbReference>
<dbReference type="FunFam" id="3.40.50.620:FF:000124">
    <property type="entry name" value="Leucine--tRNA ligase"/>
    <property type="match status" value="1"/>
</dbReference>
<dbReference type="FunFam" id="3.90.740.10:FF:000012">
    <property type="entry name" value="Leucine--tRNA ligase"/>
    <property type="match status" value="1"/>
</dbReference>
<dbReference type="Gene3D" id="2.20.28.290">
    <property type="match status" value="1"/>
</dbReference>
<dbReference type="Gene3D" id="3.10.20.590">
    <property type="match status" value="1"/>
</dbReference>
<dbReference type="Gene3D" id="3.40.50.620">
    <property type="entry name" value="HUPs"/>
    <property type="match status" value="2"/>
</dbReference>
<dbReference type="Gene3D" id="1.10.730.10">
    <property type="entry name" value="Isoleucyl-tRNA Synthetase, Domain 1"/>
    <property type="match status" value="2"/>
</dbReference>
<dbReference type="HAMAP" id="MF_00049_B">
    <property type="entry name" value="Leu_tRNA_synth_B"/>
    <property type="match status" value="1"/>
</dbReference>
<dbReference type="InterPro" id="IPR001412">
    <property type="entry name" value="aa-tRNA-synth_I_CS"/>
</dbReference>
<dbReference type="InterPro" id="IPR002300">
    <property type="entry name" value="aa-tRNA-synth_Ia"/>
</dbReference>
<dbReference type="InterPro" id="IPR002302">
    <property type="entry name" value="Leu-tRNA-ligase"/>
</dbReference>
<dbReference type="InterPro" id="IPR025709">
    <property type="entry name" value="Leu_tRNA-synth_edit"/>
</dbReference>
<dbReference type="InterPro" id="IPR013155">
    <property type="entry name" value="M/V/L/I-tRNA-synth_anticd-bd"/>
</dbReference>
<dbReference type="InterPro" id="IPR015413">
    <property type="entry name" value="Methionyl/Leucyl_tRNA_Synth"/>
</dbReference>
<dbReference type="InterPro" id="IPR014729">
    <property type="entry name" value="Rossmann-like_a/b/a_fold"/>
</dbReference>
<dbReference type="InterPro" id="IPR009080">
    <property type="entry name" value="tRNAsynth_Ia_anticodon-bd"/>
</dbReference>
<dbReference type="InterPro" id="IPR009008">
    <property type="entry name" value="Val/Leu/Ile-tRNA-synth_edit"/>
</dbReference>
<dbReference type="NCBIfam" id="TIGR00396">
    <property type="entry name" value="leuS_bact"/>
    <property type="match status" value="1"/>
</dbReference>
<dbReference type="PANTHER" id="PTHR43740:SF2">
    <property type="entry name" value="LEUCINE--TRNA LIGASE, MITOCHONDRIAL"/>
    <property type="match status" value="1"/>
</dbReference>
<dbReference type="PANTHER" id="PTHR43740">
    <property type="entry name" value="LEUCYL-TRNA SYNTHETASE"/>
    <property type="match status" value="1"/>
</dbReference>
<dbReference type="Pfam" id="PF08264">
    <property type="entry name" value="Anticodon_1"/>
    <property type="match status" value="1"/>
</dbReference>
<dbReference type="Pfam" id="PF00133">
    <property type="entry name" value="tRNA-synt_1"/>
    <property type="match status" value="2"/>
</dbReference>
<dbReference type="Pfam" id="PF13603">
    <property type="entry name" value="tRNA-synt_1_2"/>
    <property type="match status" value="1"/>
</dbReference>
<dbReference type="Pfam" id="PF09334">
    <property type="entry name" value="tRNA-synt_1g"/>
    <property type="match status" value="1"/>
</dbReference>
<dbReference type="PRINTS" id="PR00985">
    <property type="entry name" value="TRNASYNTHLEU"/>
</dbReference>
<dbReference type="SUPFAM" id="SSF47323">
    <property type="entry name" value="Anticodon-binding domain of a subclass of class I aminoacyl-tRNA synthetases"/>
    <property type="match status" value="1"/>
</dbReference>
<dbReference type="SUPFAM" id="SSF52374">
    <property type="entry name" value="Nucleotidylyl transferase"/>
    <property type="match status" value="1"/>
</dbReference>
<dbReference type="SUPFAM" id="SSF50677">
    <property type="entry name" value="ValRS/IleRS/LeuRS editing domain"/>
    <property type="match status" value="1"/>
</dbReference>
<dbReference type="PROSITE" id="PS00178">
    <property type="entry name" value="AA_TRNA_LIGASE_I"/>
    <property type="match status" value="1"/>
</dbReference>
<accession>A8H7C2</accession>
<evidence type="ECO:0000255" key="1">
    <source>
        <dbReference type="HAMAP-Rule" id="MF_00049"/>
    </source>
</evidence>
<evidence type="ECO:0000305" key="2"/>
<comment type="catalytic activity">
    <reaction evidence="1">
        <text>tRNA(Leu) + L-leucine + ATP = L-leucyl-tRNA(Leu) + AMP + diphosphate</text>
        <dbReference type="Rhea" id="RHEA:11688"/>
        <dbReference type="Rhea" id="RHEA-COMP:9613"/>
        <dbReference type="Rhea" id="RHEA-COMP:9622"/>
        <dbReference type="ChEBI" id="CHEBI:30616"/>
        <dbReference type="ChEBI" id="CHEBI:33019"/>
        <dbReference type="ChEBI" id="CHEBI:57427"/>
        <dbReference type="ChEBI" id="CHEBI:78442"/>
        <dbReference type="ChEBI" id="CHEBI:78494"/>
        <dbReference type="ChEBI" id="CHEBI:456215"/>
        <dbReference type="EC" id="6.1.1.4"/>
    </reaction>
</comment>
<comment type="subcellular location">
    <subcellularLocation>
        <location evidence="1">Cytoplasm</location>
    </subcellularLocation>
</comment>
<comment type="similarity">
    <text evidence="1">Belongs to the class-I aminoacyl-tRNA synthetase family.</text>
</comment>
<comment type="sequence caution" evidence="2">
    <conflict type="erroneous initiation">
        <sequence resource="EMBL-CDS" id="ABV88459"/>
    </conflict>
</comment>
<feature type="chain" id="PRO_0000334819" description="Leucine--tRNA ligase">
    <location>
        <begin position="1"/>
        <end position="859"/>
    </location>
</feature>
<feature type="short sequence motif" description="'HIGH' region">
    <location>
        <begin position="42"/>
        <end position="52"/>
    </location>
</feature>
<feature type="short sequence motif" description="'KMSKS' region">
    <location>
        <begin position="618"/>
        <end position="622"/>
    </location>
</feature>
<feature type="binding site" evidence="1">
    <location>
        <position position="621"/>
    </location>
    <ligand>
        <name>ATP</name>
        <dbReference type="ChEBI" id="CHEBI:30616"/>
    </ligand>
</feature>
<protein>
    <recommendedName>
        <fullName evidence="1">Leucine--tRNA ligase</fullName>
        <ecNumber evidence="1">6.1.1.4</ecNumber>
    </recommendedName>
    <alternativeName>
        <fullName evidence="1">Leucyl-tRNA synthetase</fullName>
        <shortName evidence="1">LeuRS</shortName>
    </alternativeName>
</protein>
<keyword id="KW-0030">Aminoacyl-tRNA synthetase</keyword>
<keyword id="KW-0067">ATP-binding</keyword>
<keyword id="KW-0963">Cytoplasm</keyword>
<keyword id="KW-0436">Ligase</keyword>
<keyword id="KW-0547">Nucleotide-binding</keyword>
<keyword id="KW-0648">Protein biosynthesis</keyword>
<keyword id="KW-1185">Reference proteome</keyword>
<organism>
    <name type="scientific">Shewanella pealeana (strain ATCC 700345 / ANG-SQ1)</name>
    <dbReference type="NCBI Taxonomy" id="398579"/>
    <lineage>
        <taxon>Bacteria</taxon>
        <taxon>Pseudomonadati</taxon>
        <taxon>Pseudomonadota</taxon>
        <taxon>Gammaproteobacteria</taxon>
        <taxon>Alteromonadales</taxon>
        <taxon>Shewanellaceae</taxon>
        <taxon>Shewanella</taxon>
    </lineage>
</organism>
<sequence length="859" mass="97391">MQEQYTPSEIEAKVQQHWQDTKTFEVTEDENKEKFYCLSMFPYPSGRLHMGHVRNYTIGDVVSRYQRLQGKNVLQPIGWDSFGLPAENAAIKNNTAPAPWTYENIDYMKNQLKMLGFGYDWSREIATCTPEYYRWEQWFFTKLYEKGLVYKKTSSVNWCPNDETVLANEQVIDGCCWRCDTTVEQKEIPQWFIKITEYAEELLNDIDTLEEWPEQVKTMQRNWIGRSEGIEMTFQVAGSDQSFDIYTTRPDTVMGVTYVAIAAGHPLAEQAAINNPALVEFIEECKNADTTEAAMAAMEKKGVATGLNAIHPITGKEVPIWVGNFVLMNYGTGAVMSVPAHDQRDYEFAKKYGLNIEAVIKPVDGEVDISEEAYTEKGVLFNSAEFDGLDFQAAFDAIDAKLTAEGKGKRQVNFRLRDWGVSRQRYWGAPIPMVTLADGTVMPTPEDQLPVILPEDVVMDGIQSPIKSDKEWAKTTINGQEAFRETDTFDTFMESSWYYARYCSPHADEMLDPAKANYWLPVDQYIGGIEHACMHLLYFRFFHKLLRDTGLVNSNEPAKRLLTQGMVLADAYYYNNEKGARVWVAPSDVTVQETDDKGRTVKAVDSEGHELVYTGMSKMSKSKNNGIDPQEMVDKYGADTVRLFMMFAAPPELTLEWQESSVEGAHRFIKRLWKTAHDHIANGTTAELDVKSLNAAQKELRRELHKTIAKVGDDIERRQMFNTAIASIMELMNRLQKAPSETDQDKALMQEALNAVIRLLYPIIPHTCFVLWNELGNQGAIEEVLWPEVDESALVEDSKLIIVQVNGKLRAKITVAADASKEEVEAAGMAEEGVVKHTEDKTVRKVIYVPGKLLNIVAN</sequence>
<proteinExistence type="inferred from homology"/>